<protein>
    <recommendedName>
        <fullName evidence="4">Fluoroacetate dehalogenase</fullName>
        <ecNumber evidence="2 3">3.8.1.3</ecNumber>
    </recommendedName>
</protein>
<reference key="1">
    <citation type="journal article" date="2004" name="Nat. Biotechnol.">
        <title>Complete genome sequence of the metabolically versatile photosynthetic bacterium Rhodopseudomonas palustris.</title>
        <authorList>
            <person name="Larimer F.W."/>
            <person name="Chain P."/>
            <person name="Hauser L."/>
            <person name="Lamerdin J.E."/>
            <person name="Malfatti S."/>
            <person name="Do L."/>
            <person name="Land M.L."/>
            <person name="Pelletier D.A."/>
            <person name="Beatty J.T."/>
            <person name="Lang A.S."/>
            <person name="Tabita F.R."/>
            <person name="Gibson J.L."/>
            <person name="Hanson T.E."/>
            <person name="Bobst C."/>
            <person name="Torres y Torres J.L."/>
            <person name="Peres C."/>
            <person name="Harrison F.H."/>
            <person name="Gibson J."/>
            <person name="Harwood C.S."/>
        </authorList>
    </citation>
    <scope>NUCLEOTIDE SEQUENCE [LARGE SCALE GENOMIC DNA]</scope>
    <source>
        <strain>ATCC BAA-98 / CGA009</strain>
    </source>
</reference>
<reference key="2">
    <citation type="journal article" date="2010" name="Microb. Biotechnol.">
        <title>Sequence- and activity-based screening of microbial genomes for novel dehalogenases.</title>
        <authorList>
            <person name="Chan W.Y."/>
            <person name="Wong M."/>
            <person name="Guthrie J."/>
            <person name="Savchenko A.V."/>
            <person name="Yakunin A.F."/>
            <person name="Pai E.F."/>
            <person name="Edwards E.A."/>
        </authorList>
    </citation>
    <scope>CATALYTIC ACTIVITY</scope>
    <scope>FUNCTION</scope>
    <scope>BIOPHYSICOCHEMICAL PROPERTIES</scope>
</reference>
<reference evidence="7 8 9 10 11 12 13 14" key="3">
    <citation type="journal article" date="2011" name="J. Am. Chem. Soc.">
        <title>Mapping the reaction coordinates of enzymatic defluorination.</title>
        <authorList>
            <person name="Chan P.W."/>
            <person name="Yakunin A.F."/>
            <person name="Edwards E.A."/>
            <person name="Pai E.F."/>
        </authorList>
    </citation>
    <scope>X-RAY CRYSTALLOGRAPHY (1.05 ANGSTROMS) OF WILD-TYPE AND MUTANTS ASN-110 AND ASN-280 IN COMPLEXES WITH FLUOROACETATE AND ANALOGS</scope>
    <scope>CATALYTIC ACTIVITY</scope>
    <scope>FUNCTION</scope>
    <scope>SUBUNIT</scope>
    <scope>ACTIVE SITE</scope>
    <scope>BIOPHYSICOCHEMICAL PROPERTIES</scope>
    <scope>MUTAGENESIS OF PHE-40; ASP-110; HIS-155; TRP-156; TRP-185; TYR-219 AND HIS-280</scope>
</reference>
<sequence>MPDLADLFPGFGSEWINTSSGRIFARVGGDGPPLLLLHGFPQTHVMWHRVAPKLAERFKVIVADLPGYGWSDMPESDEQHTPYTKRAMAKQLIEAMEQLGHVHFALAGHDRGARVSYRLALDSPGRLSKLAVLDILPTYEYWQRMNRAYALKIYHWSFLAQPAPLPENLLGGDPDFYVKAKLASWTRAGDLSAFDPRAVEHYRIAFADPMRRHVMCEDYRAGAYADFEHDKIDVEAGNKIPVPMLALWGASGIAQSAATPLDVWRKWASDVQGAPIESGHFLPEEAPDQTAEALVRFFSAAP</sequence>
<gene>
    <name type="ordered locus">RPA1163</name>
</gene>
<evidence type="ECO:0000255" key="1"/>
<evidence type="ECO:0000269" key="2">
    <source>
    </source>
</evidence>
<evidence type="ECO:0000269" key="3">
    <source ref="2"/>
</evidence>
<evidence type="ECO:0000303" key="4">
    <source ref="2"/>
</evidence>
<evidence type="ECO:0000305" key="5"/>
<evidence type="ECO:0000305" key="6">
    <source>
    </source>
</evidence>
<evidence type="ECO:0007744" key="7">
    <source>
        <dbReference type="PDB" id="3R3U"/>
    </source>
</evidence>
<evidence type="ECO:0007744" key="8">
    <source>
        <dbReference type="PDB" id="3R3V"/>
    </source>
</evidence>
<evidence type="ECO:0007744" key="9">
    <source>
        <dbReference type="PDB" id="3R3W"/>
    </source>
</evidence>
<evidence type="ECO:0007744" key="10">
    <source>
        <dbReference type="PDB" id="3R3X"/>
    </source>
</evidence>
<evidence type="ECO:0007744" key="11">
    <source>
        <dbReference type="PDB" id="3R3Y"/>
    </source>
</evidence>
<evidence type="ECO:0007744" key="12">
    <source>
        <dbReference type="PDB" id="3R3Z"/>
    </source>
</evidence>
<evidence type="ECO:0007744" key="13">
    <source>
        <dbReference type="PDB" id="3R40"/>
    </source>
</evidence>
<evidence type="ECO:0007744" key="14">
    <source>
        <dbReference type="PDB" id="3R41"/>
    </source>
</evidence>
<evidence type="ECO:0007829" key="15">
    <source>
        <dbReference type="PDB" id="3R40"/>
    </source>
</evidence>
<evidence type="ECO:0007829" key="16">
    <source>
        <dbReference type="PDB" id="3R41"/>
    </source>
</evidence>
<feature type="chain" id="PRO_0000398584" description="Fluoroacetate dehalogenase">
    <location>
        <begin position="1"/>
        <end position="302"/>
    </location>
</feature>
<feature type="domain" description="AB hydrolase-1" evidence="1">
    <location>
        <begin position="32"/>
        <end position="270"/>
    </location>
</feature>
<feature type="active site" description="Nucleophile" evidence="2">
    <location>
        <position position="110"/>
    </location>
</feature>
<feature type="active site" description="Proton acceptor" evidence="2">
    <location>
        <position position="280"/>
    </location>
</feature>
<feature type="binding site" evidence="2 8">
    <location>
        <position position="111"/>
    </location>
    <ligand>
        <name>fluoroacetate</name>
        <dbReference type="ChEBI" id="CHEBI:18172"/>
    </ligand>
</feature>
<feature type="binding site" evidence="2 8">
    <location>
        <position position="114"/>
    </location>
    <ligand>
        <name>fluoroacetate</name>
        <dbReference type="ChEBI" id="CHEBI:18172"/>
    </ligand>
</feature>
<feature type="binding site" evidence="2 8">
    <location>
        <position position="155"/>
    </location>
    <ligand>
        <name>fluoroacetate</name>
        <dbReference type="ChEBI" id="CHEBI:18172"/>
    </ligand>
</feature>
<feature type="binding site" evidence="2 8">
    <location>
        <position position="156"/>
    </location>
    <ligand>
        <name>fluoroacetate</name>
        <dbReference type="ChEBI" id="CHEBI:18172"/>
    </ligand>
</feature>
<feature type="binding site" evidence="2 8">
    <location>
        <position position="219"/>
    </location>
    <ligand>
        <name>fluoroacetate</name>
        <dbReference type="ChEBI" id="CHEBI:18172"/>
    </ligand>
</feature>
<feature type="site" description="Important for enzyme activity" evidence="6">
    <location>
        <position position="134"/>
    </location>
</feature>
<feature type="mutagenesis site" description="Reduced catalytic rate. Minor effect on substrate affinity." evidence="2">
    <original>F</original>
    <variation>A</variation>
    <location>
        <position position="40"/>
    </location>
</feature>
<feature type="mutagenesis site" description="Loss of enzyme activity." evidence="2">
    <original>D</original>
    <variation>N</variation>
    <location>
        <position position="110"/>
    </location>
</feature>
<feature type="mutagenesis site" description="Reduced catalytic rate with fluoroacetate, but increased catalytic rate with chloroacetate. Minor effect on substrate affinity." evidence="2">
    <original>H</original>
    <variation>N</variation>
    <location>
        <position position="155"/>
    </location>
</feature>
<feature type="mutagenesis site" description="Reduced catalytic rate. Reduced substrate affinity." evidence="2">
    <original>W</original>
    <variation>H</variation>
    <location>
        <position position="156"/>
    </location>
</feature>
<feature type="mutagenesis site" description="Reduced catalytic rate. Minor effect on substrate affinity." evidence="2">
    <original>W</original>
    <variation>F</variation>
    <location>
        <position position="185"/>
    </location>
</feature>
<feature type="mutagenesis site" description="Reduced catalytic rate. Minor effect on substrate affinity." evidence="2">
    <original>Y</original>
    <variation>F</variation>
    <location>
        <position position="219"/>
    </location>
</feature>
<feature type="mutagenesis site" description="Abolishes hydrolysis of covalent reaction intermediate." evidence="2">
    <original>H</original>
    <variation>N</variation>
    <location>
        <position position="280"/>
    </location>
</feature>
<feature type="strand" evidence="15">
    <location>
        <begin position="12"/>
        <end position="16"/>
    </location>
</feature>
<feature type="strand" evidence="15">
    <location>
        <begin position="23"/>
        <end position="29"/>
    </location>
</feature>
<feature type="strand" evidence="15">
    <location>
        <begin position="31"/>
        <end position="37"/>
    </location>
</feature>
<feature type="helix" evidence="15">
    <location>
        <begin position="44"/>
        <end position="49"/>
    </location>
</feature>
<feature type="helix" evidence="15">
    <location>
        <begin position="51"/>
        <end position="55"/>
    </location>
</feature>
<feature type="strand" evidence="15">
    <location>
        <begin position="58"/>
        <end position="63"/>
    </location>
</feature>
<feature type="helix" evidence="15">
    <location>
        <begin position="81"/>
        <end position="83"/>
    </location>
</feature>
<feature type="helix" evidence="15">
    <location>
        <begin position="85"/>
        <end position="98"/>
    </location>
</feature>
<feature type="strand" evidence="15">
    <location>
        <begin position="102"/>
        <end position="109"/>
    </location>
</feature>
<feature type="helix" evidence="15">
    <location>
        <begin position="111"/>
        <end position="122"/>
    </location>
</feature>
<feature type="helix" evidence="15">
    <location>
        <begin position="124"/>
        <end position="126"/>
    </location>
</feature>
<feature type="strand" evidence="15">
    <location>
        <begin position="127"/>
        <end position="134"/>
    </location>
</feature>
<feature type="helix" evidence="15">
    <location>
        <begin position="138"/>
        <end position="144"/>
    </location>
</feature>
<feature type="helix" evidence="15">
    <location>
        <begin position="147"/>
        <end position="152"/>
    </location>
</feature>
<feature type="helix" evidence="15">
    <location>
        <begin position="155"/>
        <end position="159"/>
    </location>
</feature>
<feature type="helix" evidence="15">
    <location>
        <begin position="165"/>
        <end position="170"/>
    </location>
</feature>
<feature type="helix" evidence="15">
    <location>
        <begin position="174"/>
        <end position="184"/>
    </location>
</feature>
<feature type="strand" evidence="15">
    <location>
        <begin position="186"/>
        <end position="191"/>
    </location>
</feature>
<feature type="helix" evidence="15">
    <location>
        <begin position="196"/>
        <end position="206"/>
    </location>
</feature>
<feature type="helix" evidence="15">
    <location>
        <begin position="209"/>
        <end position="223"/>
    </location>
</feature>
<feature type="helix" evidence="15">
    <location>
        <begin position="225"/>
        <end position="236"/>
    </location>
</feature>
<feature type="strand" evidence="15">
    <location>
        <begin position="244"/>
        <end position="249"/>
    </location>
</feature>
<feature type="turn" evidence="16">
    <location>
        <begin position="254"/>
        <end position="257"/>
    </location>
</feature>
<feature type="helix" evidence="15">
    <location>
        <begin position="261"/>
        <end position="267"/>
    </location>
</feature>
<feature type="strand" evidence="15">
    <location>
        <begin position="268"/>
        <end position="278"/>
    </location>
</feature>
<feature type="helix" evidence="15">
    <location>
        <begin position="282"/>
        <end position="285"/>
    </location>
</feature>
<feature type="helix" evidence="15">
    <location>
        <begin position="287"/>
        <end position="299"/>
    </location>
</feature>
<keyword id="KW-0002">3D-structure</keyword>
<keyword id="KW-0378">Hydrolase</keyword>
<name>DEHA_RHOPA</name>
<organism>
    <name type="scientific">Rhodopseudomonas palustris (strain ATCC BAA-98 / CGA009)</name>
    <dbReference type="NCBI Taxonomy" id="258594"/>
    <lineage>
        <taxon>Bacteria</taxon>
        <taxon>Pseudomonadati</taxon>
        <taxon>Pseudomonadota</taxon>
        <taxon>Alphaproteobacteria</taxon>
        <taxon>Hyphomicrobiales</taxon>
        <taxon>Nitrobacteraceae</taxon>
        <taxon>Rhodopseudomonas</taxon>
    </lineage>
</organism>
<comment type="function">
    <text evidence="2 3">Catalyzes the hydrolytic defluorination of fluoroacetate to produce glycolate (PubMed:21510690, Ref.2). Has lower activity towards chloroacetate and bromoacetate (PubMed:21510690, Ref.2).</text>
</comment>
<comment type="catalytic activity">
    <reaction evidence="2 3">
        <text>a haloacetate + H2O = a halide anion + glycolate + H(+)</text>
        <dbReference type="Rhea" id="RHEA:11044"/>
        <dbReference type="ChEBI" id="CHEBI:15377"/>
        <dbReference type="ChEBI" id="CHEBI:15378"/>
        <dbReference type="ChEBI" id="CHEBI:16042"/>
        <dbReference type="ChEBI" id="CHEBI:29805"/>
        <dbReference type="ChEBI" id="CHEBI:85638"/>
        <dbReference type="EC" id="3.8.1.3"/>
    </reaction>
</comment>
<comment type="catalytic activity">
    <reaction evidence="2 3">
        <text>fluoroacetate + H2O = fluoride + glycolate + H(+)</text>
        <dbReference type="Rhea" id="RHEA:30051"/>
        <dbReference type="ChEBI" id="CHEBI:15377"/>
        <dbReference type="ChEBI" id="CHEBI:15378"/>
        <dbReference type="ChEBI" id="CHEBI:17051"/>
        <dbReference type="ChEBI" id="CHEBI:18172"/>
        <dbReference type="ChEBI" id="CHEBI:29805"/>
        <dbReference type="EC" id="3.8.1.3"/>
    </reaction>
</comment>
<comment type="catalytic activity">
    <reaction evidence="2 3">
        <text>chloroacetate + H2O = glycolate + chloride + H(+)</text>
        <dbReference type="Rhea" id="RHEA:25189"/>
        <dbReference type="ChEBI" id="CHEBI:15377"/>
        <dbReference type="ChEBI" id="CHEBI:15378"/>
        <dbReference type="ChEBI" id="CHEBI:17996"/>
        <dbReference type="ChEBI" id="CHEBI:23123"/>
        <dbReference type="ChEBI" id="CHEBI:29805"/>
        <dbReference type="EC" id="3.8.1.3"/>
    </reaction>
</comment>
<comment type="biophysicochemical properties">
    <kinetics>
        <KM evidence="2 3">3.3 mM for fluoroacetate</KM>
        <KM evidence="3">1.4 mM for chloroacetate</KM>
        <KM evidence="2">1.6 mM for chloroacetate</KM>
        <text evidence="2">kcat is 6.7 min(-1) with fluoroacetate as substrate. kcat is 1.38 min(-1) with chloroacetate as substrate.</text>
    </kinetics>
</comment>
<comment type="subunit">
    <text evidence="2">Homodimer.</text>
</comment>
<comment type="similarity">
    <text evidence="5">Belongs to the AB hydrolase superfamily. Epoxide hydrolase family.</text>
</comment>
<accession>Q6NAM1</accession>
<dbReference type="EC" id="3.8.1.3" evidence="2 3"/>
<dbReference type="EMBL" id="BX572596">
    <property type="protein sequence ID" value="CAE26606.1"/>
    <property type="molecule type" value="Genomic_DNA"/>
</dbReference>
<dbReference type="RefSeq" id="WP_011156727.1">
    <property type="nucleotide sequence ID" value="NZ_CP116810.1"/>
</dbReference>
<dbReference type="PDB" id="3R3U">
    <property type="method" value="X-ray"/>
    <property type="resolution" value="1.60 A"/>
    <property type="chains" value="A/B/C/D=1-302"/>
</dbReference>
<dbReference type="PDB" id="3R3V">
    <property type="method" value="X-ray"/>
    <property type="resolution" value="1.50 A"/>
    <property type="chains" value="A/B=1-302"/>
</dbReference>
<dbReference type="PDB" id="3R3W">
    <property type="method" value="X-ray"/>
    <property type="resolution" value="1.60 A"/>
    <property type="chains" value="A/B=1-302"/>
</dbReference>
<dbReference type="PDB" id="3R3X">
    <property type="method" value="X-ray"/>
    <property type="resolution" value="1.80 A"/>
    <property type="chains" value="A/B=1-302"/>
</dbReference>
<dbReference type="PDB" id="3R3Y">
    <property type="method" value="X-ray"/>
    <property type="resolution" value="1.15 A"/>
    <property type="chains" value="A/B=1-302"/>
</dbReference>
<dbReference type="PDB" id="3R3Z">
    <property type="method" value="X-ray"/>
    <property type="resolution" value="1.70 A"/>
    <property type="chains" value="A/B/C/D=1-302"/>
</dbReference>
<dbReference type="PDB" id="3R40">
    <property type="method" value="X-ray"/>
    <property type="resolution" value="1.05 A"/>
    <property type="chains" value="A/B=1-302"/>
</dbReference>
<dbReference type="PDB" id="3R41">
    <property type="method" value="X-ray"/>
    <property type="resolution" value="1.05 A"/>
    <property type="chains" value="A/B=1-302"/>
</dbReference>
<dbReference type="PDB" id="5K3A">
    <property type="method" value="X-ray"/>
    <property type="resolution" value="1.51 A"/>
    <property type="chains" value="A/B=1-302"/>
</dbReference>
<dbReference type="PDB" id="5K3B">
    <property type="method" value="X-ray"/>
    <property type="resolution" value="1.58 A"/>
    <property type="chains" value="A/B=1-302"/>
</dbReference>
<dbReference type="PDB" id="5K3C">
    <property type="method" value="X-ray"/>
    <property type="resolution" value="1.54 A"/>
    <property type="chains" value="A/B=3-300"/>
</dbReference>
<dbReference type="PDB" id="5K3D">
    <property type="method" value="X-ray"/>
    <property type="resolution" value="1.45 A"/>
    <property type="chains" value="A/B=4-300"/>
</dbReference>
<dbReference type="PDB" id="5K3E">
    <property type="method" value="X-ray"/>
    <property type="resolution" value="1.54 A"/>
    <property type="chains" value="A/B=1-302"/>
</dbReference>
<dbReference type="PDB" id="5K3F">
    <property type="method" value="X-ray"/>
    <property type="resolution" value="1.54 A"/>
    <property type="chains" value="A/B=1-302"/>
</dbReference>
<dbReference type="PDB" id="5NYV">
    <property type="method" value="X-ray"/>
    <property type="resolution" value="1.60 A"/>
    <property type="chains" value="A/B=1-302"/>
</dbReference>
<dbReference type="PDB" id="5O2G">
    <property type="method" value="X-ray"/>
    <property type="resolution" value="2.10 A"/>
    <property type="chains" value="A/B=1-302"/>
</dbReference>
<dbReference type="PDB" id="5O2I">
    <property type="method" value="X-ray"/>
    <property type="resolution" value="2.00 A"/>
    <property type="chains" value="A/B=1-302"/>
</dbReference>
<dbReference type="PDB" id="5SWN">
    <property type="method" value="X-ray"/>
    <property type="resolution" value="1.54 A"/>
    <property type="chains" value="A/B=4-300"/>
</dbReference>
<dbReference type="PDB" id="5T4T">
    <property type="method" value="X-ray"/>
    <property type="resolution" value="1.51 A"/>
    <property type="chains" value="A/B=1-302"/>
</dbReference>
<dbReference type="PDB" id="6FSX">
    <property type="method" value="X-ray"/>
    <property type="resolution" value="1.80 A"/>
    <property type="chains" value="A/B=1-302"/>
</dbReference>
<dbReference type="PDB" id="6GXD">
    <property type="method" value="X-ray"/>
    <property type="resolution" value="1.80 A"/>
    <property type="chains" value="A/B=1-302"/>
</dbReference>
<dbReference type="PDB" id="6GXF">
    <property type="method" value="X-ray"/>
    <property type="resolution" value="1.80 A"/>
    <property type="chains" value="A/B=1-302"/>
</dbReference>
<dbReference type="PDB" id="6GXH">
    <property type="method" value="X-ray"/>
    <property type="resolution" value="1.80 A"/>
    <property type="chains" value="A/B=1-302"/>
</dbReference>
<dbReference type="PDB" id="6GXL">
    <property type="method" value="X-ray"/>
    <property type="resolution" value="1.80 A"/>
    <property type="chains" value="A/B=1-302"/>
</dbReference>
<dbReference type="PDB" id="6GXT">
    <property type="method" value="X-ray"/>
    <property type="resolution" value="1.95 A"/>
    <property type="chains" value="A/B=1-302"/>
</dbReference>
<dbReference type="PDB" id="6MUH">
    <property type="method" value="X-ray"/>
    <property type="resolution" value="1.80 A"/>
    <property type="chains" value="A/B=1-302"/>
</dbReference>
<dbReference type="PDB" id="6MUY">
    <property type="method" value="X-ray"/>
    <property type="resolution" value="1.80 A"/>
    <property type="chains" value="A/B=1-302"/>
</dbReference>
<dbReference type="PDB" id="6MZZ">
    <property type="method" value="X-ray"/>
    <property type="resolution" value="1.80 A"/>
    <property type="chains" value="A/B=1-302"/>
</dbReference>
<dbReference type="PDB" id="6N00">
    <property type="method" value="X-ray"/>
    <property type="resolution" value="1.90 A"/>
    <property type="chains" value="A/B=1-302"/>
</dbReference>
<dbReference type="PDB" id="6QHP">
    <property type="method" value="X-ray"/>
    <property type="resolution" value="1.80 A"/>
    <property type="chains" value="A/B=1-302"/>
</dbReference>
<dbReference type="PDB" id="6QHQ">
    <property type="method" value="X-ray"/>
    <property type="resolution" value="1.74 A"/>
    <property type="chains" value="A/B=1-302"/>
</dbReference>
<dbReference type="PDB" id="6QHS">
    <property type="method" value="X-ray"/>
    <property type="resolution" value="1.73 A"/>
    <property type="chains" value="A/B=1-302"/>
</dbReference>
<dbReference type="PDB" id="6QHT">
    <property type="method" value="X-ray"/>
    <property type="resolution" value="1.73 A"/>
    <property type="chains" value="A/B=1-302"/>
</dbReference>
<dbReference type="PDB" id="6QHU">
    <property type="method" value="X-ray"/>
    <property type="resolution" value="1.73 A"/>
    <property type="chains" value="A/B=1-302"/>
</dbReference>
<dbReference type="PDB" id="6QHV">
    <property type="method" value="X-ray"/>
    <property type="resolution" value="1.72 A"/>
    <property type="chains" value="A/B=1-302"/>
</dbReference>
<dbReference type="PDB" id="6QHW">
    <property type="method" value="X-ray"/>
    <property type="resolution" value="1.72 A"/>
    <property type="chains" value="A/B=1-302"/>
</dbReference>
<dbReference type="PDB" id="6QHX">
    <property type="method" value="X-ray"/>
    <property type="resolution" value="1.85 A"/>
    <property type="chains" value="A/B=1-302"/>
</dbReference>
<dbReference type="PDB" id="6QHY">
    <property type="method" value="X-ray"/>
    <property type="resolution" value="1.70 A"/>
    <property type="chains" value="A/B=1-302"/>
</dbReference>
<dbReference type="PDB" id="6QHZ">
    <property type="method" value="X-ray"/>
    <property type="resolution" value="1.80 A"/>
    <property type="chains" value="A/B=1-302"/>
</dbReference>
<dbReference type="PDB" id="6QI0">
    <property type="method" value="X-ray"/>
    <property type="resolution" value="1.73 A"/>
    <property type="chains" value="A/B=1-302"/>
</dbReference>
<dbReference type="PDB" id="6QI1">
    <property type="method" value="X-ray"/>
    <property type="resolution" value="1.90 A"/>
    <property type="chains" value="A/B=1-302"/>
</dbReference>
<dbReference type="PDB" id="6QI2">
    <property type="method" value="X-ray"/>
    <property type="resolution" value="1.73 A"/>
    <property type="chains" value="A/B=1-302"/>
</dbReference>
<dbReference type="PDB" id="6QI3">
    <property type="method" value="X-ray"/>
    <property type="resolution" value="1.74 A"/>
    <property type="chains" value="A/B=1-302"/>
</dbReference>
<dbReference type="PDB" id="6QKS">
    <property type="method" value="X-ray"/>
    <property type="resolution" value="1.60 A"/>
    <property type="chains" value="A/B=1-302"/>
</dbReference>
<dbReference type="PDB" id="6QKT">
    <property type="method" value="X-ray"/>
    <property type="resolution" value="1.51 A"/>
    <property type="chains" value="A/B=1-302"/>
</dbReference>
<dbReference type="PDB" id="6QKU">
    <property type="method" value="X-ray"/>
    <property type="resolution" value="1.51 A"/>
    <property type="chains" value="A/B=1-302"/>
</dbReference>
<dbReference type="PDB" id="6QKW">
    <property type="method" value="X-ray"/>
    <property type="resolution" value="1.51 A"/>
    <property type="chains" value="A/B=1-302"/>
</dbReference>
<dbReference type="PDB" id="7A42">
    <property type="method" value="X-ray"/>
    <property type="resolution" value="1.75 A"/>
    <property type="chains" value="A/B=1-302"/>
</dbReference>
<dbReference type="PDB" id="7A43">
    <property type="method" value="X-ray"/>
    <property type="resolution" value="1.75 A"/>
    <property type="chains" value="A/B=1-302"/>
</dbReference>
<dbReference type="PDBsum" id="3R3U"/>
<dbReference type="PDBsum" id="3R3V"/>
<dbReference type="PDBsum" id="3R3W"/>
<dbReference type="PDBsum" id="3R3X"/>
<dbReference type="PDBsum" id="3R3Y"/>
<dbReference type="PDBsum" id="3R3Z"/>
<dbReference type="PDBsum" id="3R40"/>
<dbReference type="PDBsum" id="3R41"/>
<dbReference type="PDBsum" id="5K3A"/>
<dbReference type="PDBsum" id="5K3B"/>
<dbReference type="PDBsum" id="5K3C"/>
<dbReference type="PDBsum" id="5K3D"/>
<dbReference type="PDBsum" id="5K3E"/>
<dbReference type="PDBsum" id="5K3F"/>
<dbReference type="PDBsum" id="5NYV"/>
<dbReference type="PDBsum" id="5O2G"/>
<dbReference type="PDBsum" id="5O2I"/>
<dbReference type="PDBsum" id="5SWN"/>
<dbReference type="PDBsum" id="5T4T"/>
<dbReference type="PDBsum" id="6FSX"/>
<dbReference type="PDBsum" id="6GXD"/>
<dbReference type="PDBsum" id="6GXF"/>
<dbReference type="PDBsum" id="6GXH"/>
<dbReference type="PDBsum" id="6GXL"/>
<dbReference type="PDBsum" id="6GXT"/>
<dbReference type="PDBsum" id="6MUH"/>
<dbReference type="PDBsum" id="6MUY"/>
<dbReference type="PDBsum" id="6MZZ"/>
<dbReference type="PDBsum" id="6N00"/>
<dbReference type="PDBsum" id="6QHP"/>
<dbReference type="PDBsum" id="6QHQ"/>
<dbReference type="PDBsum" id="6QHS"/>
<dbReference type="PDBsum" id="6QHT"/>
<dbReference type="PDBsum" id="6QHU"/>
<dbReference type="PDBsum" id="6QHV"/>
<dbReference type="PDBsum" id="6QHW"/>
<dbReference type="PDBsum" id="6QHX"/>
<dbReference type="PDBsum" id="6QHY"/>
<dbReference type="PDBsum" id="6QHZ"/>
<dbReference type="PDBsum" id="6QI0"/>
<dbReference type="PDBsum" id="6QI1"/>
<dbReference type="PDBsum" id="6QI2"/>
<dbReference type="PDBsum" id="6QI3"/>
<dbReference type="PDBsum" id="6QKS"/>
<dbReference type="PDBsum" id="6QKT"/>
<dbReference type="PDBsum" id="6QKU"/>
<dbReference type="PDBsum" id="6QKW"/>
<dbReference type="PDBsum" id="7A42"/>
<dbReference type="PDBsum" id="7A43"/>
<dbReference type="SMR" id="Q6NAM1"/>
<dbReference type="STRING" id="258594.RPA1163"/>
<dbReference type="ESTHER" id="rhopa-q6nam1">
    <property type="family name" value="Haloacetate_dehalogenase"/>
</dbReference>
<dbReference type="GeneID" id="66892184"/>
<dbReference type="eggNOG" id="COG0596">
    <property type="taxonomic scope" value="Bacteria"/>
</dbReference>
<dbReference type="HOGENOM" id="CLU_020336_7_1_5"/>
<dbReference type="PhylomeDB" id="Q6NAM1"/>
<dbReference type="BRENDA" id="3.8.1.3">
    <property type="organism ID" value="5412"/>
</dbReference>
<dbReference type="EvolutionaryTrace" id="Q6NAM1"/>
<dbReference type="GO" id="GO:0018785">
    <property type="term" value="F:haloacetate dehalogenase activity"/>
    <property type="evidence" value="ECO:0007669"/>
    <property type="project" value="UniProtKB-EC"/>
</dbReference>
<dbReference type="Gene3D" id="3.40.50.1820">
    <property type="entry name" value="alpha/beta hydrolase"/>
    <property type="match status" value="1"/>
</dbReference>
<dbReference type="InterPro" id="IPR000073">
    <property type="entry name" value="AB_hydrolase_1"/>
</dbReference>
<dbReference type="InterPro" id="IPR029058">
    <property type="entry name" value="AB_hydrolase_fold"/>
</dbReference>
<dbReference type="InterPro" id="IPR000639">
    <property type="entry name" value="Epox_hydrolase-like"/>
</dbReference>
<dbReference type="PANTHER" id="PTHR43329">
    <property type="entry name" value="EPOXIDE HYDROLASE"/>
    <property type="match status" value="1"/>
</dbReference>
<dbReference type="Pfam" id="PF00561">
    <property type="entry name" value="Abhydrolase_1"/>
    <property type="match status" value="1"/>
</dbReference>
<dbReference type="PRINTS" id="PR00111">
    <property type="entry name" value="ABHYDROLASE"/>
</dbReference>
<dbReference type="PRINTS" id="PR00412">
    <property type="entry name" value="EPOXHYDRLASE"/>
</dbReference>
<dbReference type="SUPFAM" id="SSF53474">
    <property type="entry name" value="alpha/beta-Hydrolases"/>
    <property type="match status" value="1"/>
</dbReference>
<proteinExistence type="evidence at protein level"/>